<reference key="1">
    <citation type="journal article" date="1993" name="Biochem. Pharmacol.">
        <title>Identification of a new vascular smooth muscle contracting polypeptide in Phoneutria nigriventer spider venom.</title>
        <authorList>
            <person name="Bento A.C."/>
            <person name="Novello J.C."/>
            <person name="Marangoni S."/>
            <person name="Antunes E."/>
            <person name="Giglio J.R."/>
            <person name="Oliveira B."/>
            <person name="de Nucci G."/>
        </authorList>
    </citation>
    <scope>PROTEIN SEQUENCE</scope>
    <source>
        <tissue>Venom</tissue>
    </source>
</reference>
<name>TXV2_PHONI</name>
<sequence length="20" mass="2176">LAKRADICQPGKTSQRACET</sequence>
<dbReference type="ArachnoServer" id="AS000421">
    <property type="toxin name" value="U27-ctenitoxin-Pn1a"/>
</dbReference>
<dbReference type="GO" id="GO:0005576">
    <property type="term" value="C:extracellular region"/>
    <property type="evidence" value="ECO:0007669"/>
    <property type="project" value="UniProtKB-SubCell"/>
</dbReference>
<dbReference type="GO" id="GO:0090729">
    <property type="term" value="F:toxin activity"/>
    <property type="evidence" value="ECO:0007669"/>
    <property type="project" value="UniProtKB-KW"/>
</dbReference>
<evidence type="ECO:0000256" key="1">
    <source>
        <dbReference type="SAM" id="MobiDB-lite"/>
    </source>
</evidence>
<evidence type="ECO:0000305" key="2"/>
<accession>Q9TWR5</accession>
<organism>
    <name type="scientific">Phoneutria nigriventer</name>
    <name type="common">Brazilian armed spider</name>
    <name type="synonym">Ctenus nigriventer</name>
    <dbReference type="NCBI Taxonomy" id="6918"/>
    <lineage>
        <taxon>Eukaryota</taxon>
        <taxon>Metazoa</taxon>
        <taxon>Ecdysozoa</taxon>
        <taxon>Arthropoda</taxon>
        <taxon>Chelicerata</taxon>
        <taxon>Arachnida</taxon>
        <taxon>Araneae</taxon>
        <taxon>Araneomorphae</taxon>
        <taxon>Entelegynae</taxon>
        <taxon>Lycosoidea</taxon>
        <taxon>Ctenidae</taxon>
        <taxon>Phoneutria</taxon>
    </lineage>
</organism>
<proteinExistence type="evidence at protein level"/>
<protein>
    <recommendedName>
        <fullName>U27-ctenitoxin-Pn1a</fullName>
        <shortName>U27-CNTX-Pn1a</shortName>
    </recommendedName>
    <alternativeName>
        <fullName>Toxin PnV2</fullName>
    </alternativeName>
</protein>
<keyword id="KW-0903">Direct protein sequencing</keyword>
<keyword id="KW-1015">Disulfide bond</keyword>
<keyword id="KW-0964">Secreted</keyword>
<keyword id="KW-0800">Toxin</keyword>
<comment type="function">
    <text>Has a vascular smooth muscle contracting activity. Causes short-lived contractions of both arterial and venous rabbit vessels.</text>
</comment>
<comment type="subcellular location">
    <subcellularLocation>
        <location>Secreted</location>
    </subcellularLocation>
</comment>
<comment type="tissue specificity">
    <text>Expressed by the venom gland.</text>
</comment>
<comment type="PTM">
    <text evidence="2">Contains 4 disulfide bonds.</text>
</comment>
<feature type="chain" id="PRO_0000087646" description="U27-ctenitoxin-Pn1a">
    <location>
        <begin position="1"/>
        <end position="20" status="greater than"/>
    </location>
</feature>
<feature type="region of interest" description="Disordered" evidence="1">
    <location>
        <begin position="1"/>
        <end position="20"/>
    </location>
</feature>
<feature type="compositionally biased region" description="Polar residues" evidence="1">
    <location>
        <begin position="11"/>
        <end position="20"/>
    </location>
</feature>
<feature type="non-terminal residue">
    <location>
        <position position="20"/>
    </location>
</feature>